<accession>Q92GM7</accession>
<keyword id="KW-0227">DNA damage</keyword>
<keyword id="KW-0234">DNA repair</keyword>
<keyword id="KW-0235">DNA replication</keyword>
<keyword id="KW-0436">Ligase</keyword>
<keyword id="KW-0460">Magnesium</keyword>
<keyword id="KW-0464">Manganese</keyword>
<keyword id="KW-0479">Metal-binding</keyword>
<keyword id="KW-0520">NAD</keyword>
<keyword id="KW-0862">Zinc</keyword>
<proteinExistence type="inferred from homology"/>
<dbReference type="EC" id="6.5.1.2" evidence="1"/>
<dbReference type="EMBL" id="AE006914">
    <property type="protein sequence ID" value="AAL03634.1"/>
    <property type="molecule type" value="Genomic_DNA"/>
</dbReference>
<dbReference type="PIR" id="H97836">
    <property type="entry name" value="H97836"/>
</dbReference>
<dbReference type="RefSeq" id="WP_010977672.1">
    <property type="nucleotide sequence ID" value="NC_003103.1"/>
</dbReference>
<dbReference type="SMR" id="Q92GM7"/>
<dbReference type="GeneID" id="928244"/>
<dbReference type="KEGG" id="rco:RC1096"/>
<dbReference type="PATRIC" id="fig|272944.4.peg.1258"/>
<dbReference type="HOGENOM" id="CLU_007764_2_1_5"/>
<dbReference type="Proteomes" id="UP000000816">
    <property type="component" value="Chromosome"/>
</dbReference>
<dbReference type="GO" id="GO:0005829">
    <property type="term" value="C:cytosol"/>
    <property type="evidence" value="ECO:0007669"/>
    <property type="project" value="TreeGrafter"/>
</dbReference>
<dbReference type="GO" id="GO:0003911">
    <property type="term" value="F:DNA ligase (NAD+) activity"/>
    <property type="evidence" value="ECO:0007669"/>
    <property type="project" value="UniProtKB-UniRule"/>
</dbReference>
<dbReference type="GO" id="GO:0046872">
    <property type="term" value="F:metal ion binding"/>
    <property type="evidence" value="ECO:0007669"/>
    <property type="project" value="UniProtKB-KW"/>
</dbReference>
<dbReference type="GO" id="GO:0006281">
    <property type="term" value="P:DNA repair"/>
    <property type="evidence" value="ECO:0007669"/>
    <property type="project" value="UniProtKB-KW"/>
</dbReference>
<dbReference type="GO" id="GO:0006260">
    <property type="term" value="P:DNA replication"/>
    <property type="evidence" value="ECO:0007669"/>
    <property type="project" value="UniProtKB-KW"/>
</dbReference>
<dbReference type="CDD" id="cd17748">
    <property type="entry name" value="BRCT_DNA_ligase_like"/>
    <property type="match status" value="1"/>
</dbReference>
<dbReference type="CDD" id="cd00114">
    <property type="entry name" value="LIGANc"/>
    <property type="match status" value="1"/>
</dbReference>
<dbReference type="FunFam" id="1.10.150.20:FF:000007">
    <property type="entry name" value="DNA ligase"/>
    <property type="match status" value="1"/>
</dbReference>
<dbReference type="FunFam" id="2.40.50.140:FF:000012">
    <property type="entry name" value="DNA ligase"/>
    <property type="match status" value="1"/>
</dbReference>
<dbReference type="FunFam" id="3.30.470.30:FF:000001">
    <property type="entry name" value="DNA ligase"/>
    <property type="match status" value="1"/>
</dbReference>
<dbReference type="Gene3D" id="1.10.150.20">
    <property type="entry name" value="5' to 3' exonuclease, C-terminal subdomain"/>
    <property type="match status" value="2"/>
</dbReference>
<dbReference type="Gene3D" id="3.40.50.10190">
    <property type="entry name" value="BRCT domain"/>
    <property type="match status" value="1"/>
</dbReference>
<dbReference type="Gene3D" id="3.30.470.30">
    <property type="entry name" value="DNA ligase/mRNA capping enzyme"/>
    <property type="match status" value="1"/>
</dbReference>
<dbReference type="Gene3D" id="1.10.287.610">
    <property type="entry name" value="Helix hairpin bin"/>
    <property type="match status" value="1"/>
</dbReference>
<dbReference type="Gene3D" id="2.40.50.140">
    <property type="entry name" value="Nucleic acid-binding proteins"/>
    <property type="match status" value="1"/>
</dbReference>
<dbReference type="HAMAP" id="MF_01588">
    <property type="entry name" value="DNA_ligase_A"/>
    <property type="match status" value="1"/>
</dbReference>
<dbReference type="InterPro" id="IPR001357">
    <property type="entry name" value="BRCT_dom"/>
</dbReference>
<dbReference type="InterPro" id="IPR036420">
    <property type="entry name" value="BRCT_dom_sf"/>
</dbReference>
<dbReference type="InterPro" id="IPR041663">
    <property type="entry name" value="DisA/LigA_HHH"/>
</dbReference>
<dbReference type="InterPro" id="IPR001679">
    <property type="entry name" value="DNA_ligase"/>
</dbReference>
<dbReference type="InterPro" id="IPR018239">
    <property type="entry name" value="DNA_ligase_AS"/>
</dbReference>
<dbReference type="InterPro" id="IPR033136">
    <property type="entry name" value="DNA_ligase_CS"/>
</dbReference>
<dbReference type="InterPro" id="IPR013839">
    <property type="entry name" value="DNAligase_adenylation"/>
</dbReference>
<dbReference type="InterPro" id="IPR013840">
    <property type="entry name" value="DNAligase_N"/>
</dbReference>
<dbReference type="InterPro" id="IPR012340">
    <property type="entry name" value="NA-bd_OB-fold"/>
</dbReference>
<dbReference type="InterPro" id="IPR004150">
    <property type="entry name" value="NAD_DNA_ligase_OB"/>
</dbReference>
<dbReference type="InterPro" id="IPR010994">
    <property type="entry name" value="RuvA_2-like"/>
</dbReference>
<dbReference type="NCBIfam" id="TIGR00575">
    <property type="entry name" value="dnlj"/>
    <property type="match status" value="1"/>
</dbReference>
<dbReference type="NCBIfam" id="NF005932">
    <property type="entry name" value="PRK07956.1"/>
    <property type="match status" value="1"/>
</dbReference>
<dbReference type="PANTHER" id="PTHR23389">
    <property type="entry name" value="CHROMOSOME TRANSMISSION FIDELITY FACTOR 18"/>
    <property type="match status" value="1"/>
</dbReference>
<dbReference type="PANTHER" id="PTHR23389:SF9">
    <property type="entry name" value="DNA LIGASE"/>
    <property type="match status" value="1"/>
</dbReference>
<dbReference type="Pfam" id="PF00533">
    <property type="entry name" value="BRCT"/>
    <property type="match status" value="1"/>
</dbReference>
<dbReference type="Pfam" id="PF01653">
    <property type="entry name" value="DNA_ligase_aden"/>
    <property type="match status" value="1"/>
</dbReference>
<dbReference type="Pfam" id="PF03120">
    <property type="entry name" value="DNA_ligase_OB"/>
    <property type="match status" value="1"/>
</dbReference>
<dbReference type="Pfam" id="PF12826">
    <property type="entry name" value="HHH_2"/>
    <property type="match status" value="1"/>
</dbReference>
<dbReference type="PIRSF" id="PIRSF001604">
    <property type="entry name" value="LigA"/>
    <property type="match status" value="1"/>
</dbReference>
<dbReference type="SMART" id="SM00292">
    <property type="entry name" value="BRCT"/>
    <property type="match status" value="1"/>
</dbReference>
<dbReference type="SMART" id="SM00532">
    <property type="entry name" value="LIGANc"/>
    <property type="match status" value="1"/>
</dbReference>
<dbReference type="SUPFAM" id="SSF52113">
    <property type="entry name" value="BRCT domain"/>
    <property type="match status" value="1"/>
</dbReference>
<dbReference type="SUPFAM" id="SSF56091">
    <property type="entry name" value="DNA ligase/mRNA capping enzyme, catalytic domain"/>
    <property type="match status" value="1"/>
</dbReference>
<dbReference type="SUPFAM" id="SSF50249">
    <property type="entry name" value="Nucleic acid-binding proteins"/>
    <property type="match status" value="1"/>
</dbReference>
<dbReference type="SUPFAM" id="SSF47781">
    <property type="entry name" value="RuvA domain 2-like"/>
    <property type="match status" value="1"/>
</dbReference>
<dbReference type="PROSITE" id="PS50172">
    <property type="entry name" value="BRCT"/>
    <property type="match status" value="1"/>
</dbReference>
<dbReference type="PROSITE" id="PS01055">
    <property type="entry name" value="DNA_LIGASE_N1"/>
    <property type="match status" value="1"/>
</dbReference>
<dbReference type="PROSITE" id="PS01056">
    <property type="entry name" value="DNA_LIGASE_N2"/>
    <property type="match status" value="1"/>
</dbReference>
<organism>
    <name type="scientific">Rickettsia conorii (strain ATCC VR-613 / Malish 7)</name>
    <dbReference type="NCBI Taxonomy" id="272944"/>
    <lineage>
        <taxon>Bacteria</taxon>
        <taxon>Pseudomonadati</taxon>
        <taxon>Pseudomonadota</taxon>
        <taxon>Alphaproteobacteria</taxon>
        <taxon>Rickettsiales</taxon>
        <taxon>Rickettsiaceae</taxon>
        <taxon>Rickettsieae</taxon>
        <taxon>Rickettsia</taxon>
        <taxon>spotted fever group</taxon>
    </lineage>
</organism>
<evidence type="ECO:0000255" key="1">
    <source>
        <dbReference type="HAMAP-Rule" id="MF_01588"/>
    </source>
</evidence>
<protein>
    <recommendedName>
        <fullName evidence="1">DNA ligase</fullName>
        <ecNumber evidence="1">6.5.1.2</ecNumber>
    </recommendedName>
    <alternativeName>
        <fullName evidence="1">Polydeoxyribonucleotide synthase [NAD(+)]</fullName>
    </alternativeName>
</protein>
<name>DNLJ_RICCN</name>
<feature type="chain" id="PRO_0000280946" description="DNA ligase">
    <location>
        <begin position="1"/>
        <end position="689"/>
    </location>
</feature>
<feature type="domain" description="BRCT" evidence="1">
    <location>
        <begin position="610"/>
        <end position="689"/>
    </location>
</feature>
<feature type="active site" description="N6-AMP-lysine intermediate" evidence="1">
    <location>
        <position position="123"/>
    </location>
</feature>
<feature type="binding site" evidence="1">
    <location>
        <begin position="40"/>
        <end position="44"/>
    </location>
    <ligand>
        <name>NAD(+)</name>
        <dbReference type="ChEBI" id="CHEBI:57540"/>
    </ligand>
</feature>
<feature type="binding site" evidence="1">
    <location>
        <begin position="89"/>
        <end position="90"/>
    </location>
    <ligand>
        <name>NAD(+)</name>
        <dbReference type="ChEBI" id="CHEBI:57540"/>
    </ligand>
</feature>
<feature type="binding site" evidence="1">
    <location>
        <position position="121"/>
    </location>
    <ligand>
        <name>NAD(+)</name>
        <dbReference type="ChEBI" id="CHEBI:57540"/>
    </ligand>
</feature>
<feature type="binding site" evidence="1">
    <location>
        <position position="144"/>
    </location>
    <ligand>
        <name>NAD(+)</name>
        <dbReference type="ChEBI" id="CHEBI:57540"/>
    </ligand>
</feature>
<feature type="binding site" evidence="1">
    <location>
        <position position="179"/>
    </location>
    <ligand>
        <name>NAD(+)</name>
        <dbReference type="ChEBI" id="CHEBI:57540"/>
    </ligand>
</feature>
<feature type="binding site" evidence="1">
    <location>
        <position position="295"/>
    </location>
    <ligand>
        <name>NAD(+)</name>
        <dbReference type="ChEBI" id="CHEBI:57540"/>
    </ligand>
</feature>
<feature type="binding site" evidence="1">
    <location>
        <position position="319"/>
    </location>
    <ligand>
        <name>NAD(+)</name>
        <dbReference type="ChEBI" id="CHEBI:57540"/>
    </ligand>
</feature>
<feature type="binding site" evidence="1">
    <location>
        <position position="413"/>
    </location>
    <ligand>
        <name>Zn(2+)</name>
        <dbReference type="ChEBI" id="CHEBI:29105"/>
    </ligand>
</feature>
<feature type="binding site" evidence="1">
    <location>
        <position position="416"/>
    </location>
    <ligand>
        <name>Zn(2+)</name>
        <dbReference type="ChEBI" id="CHEBI:29105"/>
    </ligand>
</feature>
<feature type="binding site" evidence="1">
    <location>
        <position position="431"/>
    </location>
    <ligand>
        <name>Zn(2+)</name>
        <dbReference type="ChEBI" id="CHEBI:29105"/>
    </ligand>
</feature>
<feature type="binding site" evidence="1">
    <location>
        <position position="437"/>
    </location>
    <ligand>
        <name>Zn(2+)</name>
        <dbReference type="ChEBI" id="CHEBI:29105"/>
    </ligand>
</feature>
<gene>
    <name evidence="1" type="primary">ligA</name>
    <name type="synonym">lig</name>
    <name type="ordered locus">RC1096</name>
</gene>
<reference key="1">
    <citation type="journal article" date="2001" name="Science">
        <title>Mechanisms of evolution in Rickettsia conorii and R. prowazekii.</title>
        <authorList>
            <person name="Ogata H."/>
            <person name="Audic S."/>
            <person name="Renesto-Audiffren P."/>
            <person name="Fournier P.-E."/>
            <person name="Barbe V."/>
            <person name="Samson D."/>
            <person name="Roux V."/>
            <person name="Cossart P."/>
            <person name="Weissenbach J."/>
            <person name="Claverie J.-M."/>
            <person name="Raoult D."/>
        </authorList>
    </citation>
    <scope>NUCLEOTIDE SEQUENCE [LARGE SCALE GENOMIC DNA]</scope>
    <source>
        <strain>ATCC VR-613 / Malish 7</strain>
    </source>
</reference>
<comment type="function">
    <text evidence="1">DNA ligase that catalyzes the formation of phosphodiester linkages between 5'-phosphoryl and 3'-hydroxyl groups in double-stranded DNA using NAD as a coenzyme and as the energy source for the reaction. It is essential for DNA replication and repair of damaged DNA.</text>
</comment>
<comment type="catalytic activity">
    <reaction evidence="1">
        <text>NAD(+) + (deoxyribonucleotide)n-3'-hydroxyl + 5'-phospho-(deoxyribonucleotide)m = (deoxyribonucleotide)n+m + AMP + beta-nicotinamide D-nucleotide.</text>
        <dbReference type="EC" id="6.5.1.2"/>
    </reaction>
</comment>
<comment type="cofactor">
    <cofactor evidence="1">
        <name>Mg(2+)</name>
        <dbReference type="ChEBI" id="CHEBI:18420"/>
    </cofactor>
    <cofactor evidence="1">
        <name>Mn(2+)</name>
        <dbReference type="ChEBI" id="CHEBI:29035"/>
    </cofactor>
</comment>
<comment type="similarity">
    <text evidence="1">Belongs to the NAD-dependent DNA ligase family. LigA subfamily.</text>
</comment>
<sequence length="689" mass="77838">MQNIDLISEEEAQKLLEELADKIAAYNHAYYIEDNPLVSDSEYDQLFNTNLKLEQKFPHLILENSPSKKVGAKIANKFAKVTHQVPMLSLSNAFDEQDVRDFVDRIKIFLRLNEFAPIFCEPKIDGLSFSAVYKHGVLTTGATRGDGYVGEDITANIKTIKNFPHKIDNVPEFLEVRGEIYIEKQDFLNLNKEQEEQGKDKFANPRNAAAGSLRQLDSSITAKRPLKYFVYSGGVTEQNLASSQDQLLTKLKECGFNINEISKLASSEEEIFAFYEYLKTNRENLPYEIDGVVYKLNDFALQNRMGFIARSPRFATAHKFPAIIGQTKLLSITVQVGRTGTLTPVAELEPIEIGGVTVSRATLHNFQEIARKDLRIKDYVFLQRAGDVIPKIMGVDFDKRPNDTETFDTPLFCLSCNSKLHYTPEDIIIRCDNGLNCPAQNYERIRHFVSKNAMDIEGLGRKQVEFLIDKGLISNLLDIFFLKEKNDSSLAKLENMDGWGKKSVENLFKNIEKSKNVSLPRFIYALGIRHIGEQNAKLLAREFGSYNNFIAQMELLRTNEPDIYQKLKNLEGIGDKILVDIIDFFDVKENIELIKKLGEILNIEDYKETREQSGLTDKIVVFTGSLPTISRAEAKATAEKLGAKVAVGVSSNTDLVVAGVDAGSKLKKAKELNIKIIDEEEWLTLIKNV</sequence>